<proteinExistence type="inferred from homology"/>
<reference key="1">
    <citation type="journal article" date="2010" name="Genome Biol. Evol.">
        <title>Continuing evolution of Burkholderia mallei through genome reduction and large-scale rearrangements.</title>
        <authorList>
            <person name="Losada L."/>
            <person name="Ronning C.M."/>
            <person name="DeShazer D."/>
            <person name="Woods D."/>
            <person name="Fedorova N."/>
            <person name="Kim H.S."/>
            <person name="Shabalina S.A."/>
            <person name="Pearson T.R."/>
            <person name="Brinkac L."/>
            <person name="Tan P."/>
            <person name="Nandi T."/>
            <person name="Crabtree J."/>
            <person name="Badger J."/>
            <person name="Beckstrom-Sternberg S."/>
            <person name="Saqib M."/>
            <person name="Schutzer S.E."/>
            <person name="Keim P."/>
            <person name="Nierman W.C."/>
        </authorList>
    </citation>
    <scope>NUCLEOTIDE SEQUENCE [LARGE SCALE GENOMIC DNA]</scope>
    <source>
        <strain>668</strain>
    </source>
</reference>
<feature type="chain" id="PRO_1000002018" description="SsrA-binding protein">
    <location>
        <begin position="1"/>
        <end position="148"/>
    </location>
</feature>
<feature type="region of interest" description="Disordered" evidence="2">
    <location>
        <begin position="123"/>
        <end position="148"/>
    </location>
</feature>
<feature type="compositionally biased region" description="Basic and acidic residues" evidence="2">
    <location>
        <begin position="126"/>
        <end position="142"/>
    </location>
</feature>
<sequence>MSIIDNRKAFFDYHIEERYEAGLVLEGWEVKALRAGRGQIKEGYVVVKHAEIFLIGTHISPLPEASTHIKPDPVRTRKLLLHRDEIKKLIGKVEQRGYTLVPLNFHYKGGRVKCEIGLAKGKKLHDKRETEKKRDWEREKARIMRSAT</sequence>
<comment type="function">
    <text evidence="1">Required for rescue of stalled ribosomes mediated by trans-translation. Binds to transfer-messenger RNA (tmRNA), required for stable association of tmRNA with ribosomes. tmRNA and SmpB together mimic tRNA shape, replacing the anticodon stem-loop with SmpB. tmRNA is encoded by the ssrA gene; the 2 termini fold to resemble tRNA(Ala) and it encodes a 'tag peptide', a short internal open reading frame. During trans-translation Ala-aminoacylated tmRNA acts like a tRNA, entering the A-site of stalled ribosomes, displacing the stalled mRNA. The ribosome then switches to translate the ORF on the tmRNA; the nascent peptide is terminated with the 'tag peptide' encoded by the tmRNA and targeted for degradation. The ribosome is freed to recommence translation, which seems to be the essential function of trans-translation.</text>
</comment>
<comment type="subcellular location">
    <subcellularLocation>
        <location evidence="1">Cytoplasm</location>
    </subcellularLocation>
    <text evidence="1">The tmRNA-SmpB complex associates with stalled 70S ribosomes.</text>
</comment>
<comment type="similarity">
    <text evidence="1">Belongs to the SmpB family.</text>
</comment>
<dbReference type="EMBL" id="CP000570">
    <property type="protein sequence ID" value="ABN84608.1"/>
    <property type="molecule type" value="Genomic_DNA"/>
</dbReference>
<dbReference type="RefSeq" id="WP_004197080.1">
    <property type="nucleotide sequence ID" value="NC_009074.1"/>
</dbReference>
<dbReference type="SMR" id="A3NAS3"/>
<dbReference type="GeneID" id="93060677"/>
<dbReference type="KEGG" id="bpd:BURPS668_2412"/>
<dbReference type="HOGENOM" id="CLU_108953_3_0_4"/>
<dbReference type="GO" id="GO:0005829">
    <property type="term" value="C:cytosol"/>
    <property type="evidence" value="ECO:0007669"/>
    <property type="project" value="TreeGrafter"/>
</dbReference>
<dbReference type="GO" id="GO:0003723">
    <property type="term" value="F:RNA binding"/>
    <property type="evidence" value="ECO:0007669"/>
    <property type="project" value="UniProtKB-UniRule"/>
</dbReference>
<dbReference type="GO" id="GO:0070929">
    <property type="term" value="P:trans-translation"/>
    <property type="evidence" value="ECO:0007669"/>
    <property type="project" value="UniProtKB-UniRule"/>
</dbReference>
<dbReference type="CDD" id="cd09294">
    <property type="entry name" value="SmpB"/>
    <property type="match status" value="1"/>
</dbReference>
<dbReference type="Gene3D" id="2.40.280.10">
    <property type="match status" value="1"/>
</dbReference>
<dbReference type="HAMAP" id="MF_00023">
    <property type="entry name" value="SmpB"/>
    <property type="match status" value="1"/>
</dbReference>
<dbReference type="InterPro" id="IPR023620">
    <property type="entry name" value="SmpB"/>
</dbReference>
<dbReference type="InterPro" id="IPR000037">
    <property type="entry name" value="SsrA-bd_prot"/>
</dbReference>
<dbReference type="InterPro" id="IPR020081">
    <property type="entry name" value="SsrA-bd_prot_CS"/>
</dbReference>
<dbReference type="NCBIfam" id="NF003843">
    <property type="entry name" value="PRK05422.1"/>
    <property type="match status" value="1"/>
</dbReference>
<dbReference type="NCBIfam" id="TIGR00086">
    <property type="entry name" value="smpB"/>
    <property type="match status" value="1"/>
</dbReference>
<dbReference type="PANTHER" id="PTHR30308:SF2">
    <property type="entry name" value="SSRA-BINDING PROTEIN"/>
    <property type="match status" value="1"/>
</dbReference>
<dbReference type="PANTHER" id="PTHR30308">
    <property type="entry name" value="TMRNA-BINDING COMPONENT OF TRANS-TRANSLATION TAGGING COMPLEX"/>
    <property type="match status" value="1"/>
</dbReference>
<dbReference type="Pfam" id="PF01668">
    <property type="entry name" value="SmpB"/>
    <property type="match status" value="1"/>
</dbReference>
<dbReference type="SUPFAM" id="SSF74982">
    <property type="entry name" value="Small protein B (SmpB)"/>
    <property type="match status" value="1"/>
</dbReference>
<dbReference type="PROSITE" id="PS01317">
    <property type="entry name" value="SSRP"/>
    <property type="match status" value="1"/>
</dbReference>
<accession>A3NAS3</accession>
<name>SSRP_BURP6</name>
<keyword id="KW-0963">Cytoplasm</keyword>
<keyword id="KW-0694">RNA-binding</keyword>
<evidence type="ECO:0000255" key="1">
    <source>
        <dbReference type="HAMAP-Rule" id="MF_00023"/>
    </source>
</evidence>
<evidence type="ECO:0000256" key="2">
    <source>
        <dbReference type="SAM" id="MobiDB-lite"/>
    </source>
</evidence>
<protein>
    <recommendedName>
        <fullName evidence="1">SsrA-binding protein</fullName>
    </recommendedName>
    <alternativeName>
        <fullName evidence="1">Small protein B</fullName>
    </alternativeName>
</protein>
<organism>
    <name type="scientific">Burkholderia pseudomallei (strain 668)</name>
    <dbReference type="NCBI Taxonomy" id="320373"/>
    <lineage>
        <taxon>Bacteria</taxon>
        <taxon>Pseudomonadati</taxon>
        <taxon>Pseudomonadota</taxon>
        <taxon>Betaproteobacteria</taxon>
        <taxon>Burkholderiales</taxon>
        <taxon>Burkholderiaceae</taxon>
        <taxon>Burkholderia</taxon>
        <taxon>pseudomallei group</taxon>
    </lineage>
</organism>
<gene>
    <name evidence="1" type="primary">smpB</name>
    <name type="ordered locus">BURPS668_2412</name>
</gene>